<sequence>MSKNSVIIVAAGKGKRMNSSISKQFLQIKNKPILYYTLSKFSTHESIDEIVLVTLEDKIEVCGDIIDKYNINKVSKIVPGGKERQDSVYNGLKAVSKDCEVVLIHDAARPFVTSDIIENGIRYTNQYGAAACGVIPKDTIKIKSEKGFAIDTPNREDLFIVQTPQCFNYNIILDCHEKLKKHNKKVTDDTMVLENYGKSVYLYEGNYSNIKITTPEDLILGEQILEKLT</sequence>
<reference key="1">
    <citation type="journal article" date="2007" name="PLoS ONE">
        <title>Analysis of the neurotoxin complex genes in Clostridium botulinum A1-A4 and B1 strains: BoNT/A3, /Ba4 and /B1 clusters are located within plasmids.</title>
        <authorList>
            <person name="Smith T.J."/>
            <person name="Hill K.K."/>
            <person name="Foley B.T."/>
            <person name="Detter J.C."/>
            <person name="Munk A.C."/>
            <person name="Bruce D.C."/>
            <person name="Doggett N.A."/>
            <person name="Smith L.A."/>
            <person name="Marks J.D."/>
            <person name="Xie G."/>
            <person name="Brettin T.S."/>
        </authorList>
    </citation>
    <scope>NUCLEOTIDE SEQUENCE [LARGE SCALE GENOMIC DNA]</scope>
    <source>
        <strain>Okra / Type B1</strain>
    </source>
</reference>
<proteinExistence type="inferred from homology"/>
<evidence type="ECO:0000255" key="1">
    <source>
        <dbReference type="HAMAP-Rule" id="MF_00108"/>
    </source>
</evidence>
<protein>
    <recommendedName>
        <fullName evidence="1">2-C-methyl-D-erythritol 4-phosphate cytidylyltransferase</fullName>
        <ecNumber evidence="1">2.7.7.60</ecNumber>
    </recommendedName>
    <alternativeName>
        <fullName evidence="1">4-diphosphocytidyl-2C-methyl-D-erythritol synthase</fullName>
    </alternativeName>
    <alternativeName>
        <fullName evidence="1">MEP cytidylyltransferase</fullName>
        <shortName evidence="1">MCT</shortName>
    </alternativeName>
</protein>
<name>ISPD_CLOBK</name>
<comment type="function">
    <text evidence="1">Catalyzes the formation of 4-diphosphocytidyl-2-C-methyl-D-erythritol from CTP and 2-C-methyl-D-erythritol 4-phosphate (MEP).</text>
</comment>
<comment type="catalytic activity">
    <reaction evidence="1">
        <text>2-C-methyl-D-erythritol 4-phosphate + CTP + H(+) = 4-CDP-2-C-methyl-D-erythritol + diphosphate</text>
        <dbReference type="Rhea" id="RHEA:13429"/>
        <dbReference type="ChEBI" id="CHEBI:15378"/>
        <dbReference type="ChEBI" id="CHEBI:33019"/>
        <dbReference type="ChEBI" id="CHEBI:37563"/>
        <dbReference type="ChEBI" id="CHEBI:57823"/>
        <dbReference type="ChEBI" id="CHEBI:58262"/>
        <dbReference type="EC" id="2.7.7.60"/>
    </reaction>
</comment>
<comment type="pathway">
    <text evidence="1">Isoprenoid biosynthesis; isopentenyl diphosphate biosynthesis via DXP pathway; isopentenyl diphosphate from 1-deoxy-D-xylulose 5-phosphate: step 2/6.</text>
</comment>
<comment type="similarity">
    <text evidence="1">Belongs to the IspD/TarI cytidylyltransferase family. IspD subfamily.</text>
</comment>
<dbReference type="EC" id="2.7.7.60" evidence="1"/>
<dbReference type="EMBL" id="CP000939">
    <property type="protein sequence ID" value="ACA45707.1"/>
    <property type="molecule type" value="Genomic_DNA"/>
</dbReference>
<dbReference type="RefSeq" id="WP_003404303.1">
    <property type="nucleotide sequence ID" value="NC_010516.1"/>
</dbReference>
<dbReference type="SMR" id="B1IGH9"/>
<dbReference type="KEGG" id="cbb:CLD_0997"/>
<dbReference type="HOGENOM" id="CLU_061281_2_2_9"/>
<dbReference type="UniPathway" id="UPA00056">
    <property type="reaction ID" value="UER00093"/>
</dbReference>
<dbReference type="Proteomes" id="UP000008541">
    <property type="component" value="Chromosome"/>
</dbReference>
<dbReference type="GO" id="GO:0050518">
    <property type="term" value="F:2-C-methyl-D-erythritol 4-phosphate cytidylyltransferase activity"/>
    <property type="evidence" value="ECO:0007669"/>
    <property type="project" value="UniProtKB-UniRule"/>
</dbReference>
<dbReference type="GO" id="GO:0019288">
    <property type="term" value="P:isopentenyl diphosphate biosynthetic process, methylerythritol 4-phosphate pathway"/>
    <property type="evidence" value="ECO:0007669"/>
    <property type="project" value="UniProtKB-UniRule"/>
</dbReference>
<dbReference type="CDD" id="cd02516">
    <property type="entry name" value="CDP-ME_synthetase"/>
    <property type="match status" value="1"/>
</dbReference>
<dbReference type="FunFam" id="3.90.550.10:FF:000003">
    <property type="entry name" value="2-C-methyl-D-erythritol 4-phosphate cytidylyltransferase"/>
    <property type="match status" value="1"/>
</dbReference>
<dbReference type="Gene3D" id="3.90.550.10">
    <property type="entry name" value="Spore Coat Polysaccharide Biosynthesis Protein SpsA, Chain A"/>
    <property type="match status" value="1"/>
</dbReference>
<dbReference type="HAMAP" id="MF_00108">
    <property type="entry name" value="IspD"/>
    <property type="match status" value="1"/>
</dbReference>
<dbReference type="InterPro" id="IPR001228">
    <property type="entry name" value="IspD"/>
</dbReference>
<dbReference type="InterPro" id="IPR034683">
    <property type="entry name" value="IspD/TarI"/>
</dbReference>
<dbReference type="InterPro" id="IPR050088">
    <property type="entry name" value="IspD/TarI_cytidylyltransf_bact"/>
</dbReference>
<dbReference type="InterPro" id="IPR018294">
    <property type="entry name" value="ISPD_synthase_CS"/>
</dbReference>
<dbReference type="InterPro" id="IPR029044">
    <property type="entry name" value="Nucleotide-diphossugar_trans"/>
</dbReference>
<dbReference type="NCBIfam" id="TIGR00453">
    <property type="entry name" value="ispD"/>
    <property type="match status" value="1"/>
</dbReference>
<dbReference type="NCBIfam" id="NF001183">
    <property type="entry name" value="PRK00155.1-3"/>
    <property type="match status" value="1"/>
</dbReference>
<dbReference type="PANTHER" id="PTHR32125">
    <property type="entry name" value="2-C-METHYL-D-ERYTHRITOL 4-PHOSPHATE CYTIDYLYLTRANSFERASE, CHLOROPLASTIC"/>
    <property type="match status" value="1"/>
</dbReference>
<dbReference type="PANTHER" id="PTHR32125:SF4">
    <property type="entry name" value="2-C-METHYL-D-ERYTHRITOL 4-PHOSPHATE CYTIDYLYLTRANSFERASE, CHLOROPLASTIC"/>
    <property type="match status" value="1"/>
</dbReference>
<dbReference type="Pfam" id="PF01128">
    <property type="entry name" value="IspD"/>
    <property type="match status" value="1"/>
</dbReference>
<dbReference type="SUPFAM" id="SSF53448">
    <property type="entry name" value="Nucleotide-diphospho-sugar transferases"/>
    <property type="match status" value="1"/>
</dbReference>
<dbReference type="PROSITE" id="PS01295">
    <property type="entry name" value="ISPD"/>
    <property type="match status" value="1"/>
</dbReference>
<accession>B1IGH9</accession>
<feature type="chain" id="PRO_1000094322" description="2-C-methyl-D-erythritol 4-phosphate cytidylyltransferase">
    <location>
        <begin position="1"/>
        <end position="229"/>
    </location>
</feature>
<feature type="site" description="Transition state stabilizer" evidence="1">
    <location>
        <position position="16"/>
    </location>
</feature>
<feature type="site" description="Transition state stabilizer" evidence="1">
    <location>
        <position position="23"/>
    </location>
</feature>
<feature type="site" description="Positions MEP for the nucleophilic attack" evidence="1">
    <location>
        <position position="155"/>
    </location>
</feature>
<feature type="site" description="Positions MEP for the nucleophilic attack" evidence="1">
    <location>
        <position position="211"/>
    </location>
</feature>
<keyword id="KW-0414">Isoprene biosynthesis</keyword>
<keyword id="KW-0548">Nucleotidyltransferase</keyword>
<keyword id="KW-0808">Transferase</keyword>
<gene>
    <name evidence="1" type="primary">ispD</name>
    <name type="ordered locus">CLD_0997</name>
</gene>
<organism>
    <name type="scientific">Clostridium botulinum (strain Okra / Type B1)</name>
    <dbReference type="NCBI Taxonomy" id="498213"/>
    <lineage>
        <taxon>Bacteria</taxon>
        <taxon>Bacillati</taxon>
        <taxon>Bacillota</taxon>
        <taxon>Clostridia</taxon>
        <taxon>Eubacteriales</taxon>
        <taxon>Clostridiaceae</taxon>
        <taxon>Clostridium</taxon>
    </lineage>
</organism>